<reference key="1">
    <citation type="submission" date="2007-10" db="EMBL/GenBank/DDBJ databases">
        <title>Complete sequence of Shewanella pealeana ATCC 700345.</title>
        <authorList>
            <consortium name="US DOE Joint Genome Institute"/>
            <person name="Copeland A."/>
            <person name="Lucas S."/>
            <person name="Lapidus A."/>
            <person name="Barry K."/>
            <person name="Glavina del Rio T."/>
            <person name="Dalin E."/>
            <person name="Tice H."/>
            <person name="Pitluck S."/>
            <person name="Chertkov O."/>
            <person name="Brettin T."/>
            <person name="Bruce D."/>
            <person name="Detter J.C."/>
            <person name="Han C."/>
            <person name="Schmutz J."/>
            <person name="Larimer F."/>
            <person name="Land M."/>
            <person name="Hauser L."/>
            <person name="Kyrpides N."/>
            <person name="Kim E."/>
            <person name="Zhao J.-S.Z."/>
            <person name="Manno D."/>
            <person name="Hawari J."/>
            <person name="Richardson P."/>
        </authorList>
    </citation>
    <scope>NUCLEOTIDE SEQUENCE [LARGE SCALE GENOMIC DNA]</scope>
    <source>
        <strain>ATCC 700345 / ANG-SQ1</strain>
    </source>
</reference>
<gene>
    <name evidence="1" type="primary">fmt</name>
    <name type="ordered locus">Spea_0030</name>
</gene>
<comment type="function">
    <text evidence="1">Attaches a formyl group to the free amino group of methionyl-tRNA(fMet). The formyl group appears to play a dual role in the initiator identity of N-formylmethionyl-tRNA by promoting its recognition by IF2 and preventing the misappropriation of this tRNA by the elongation apparatus.</text>
</comment>
<comment type="catalytic activity">
    <reaction evidence="1">
        <text>L-methionyl-tRNA(fMet) + (6R)-10-formyltetrahydrofolate = N-formyl-L-methionyl-tRNA(fMet) + (6S)-5,6,7,8-tetrahydrofolate + H(+)</text>
        <dbReference type="Rhea" id="RHEA:24380"/>
        <dbReference type="Rhea" id="RHEA-COMP:9952"/>
        <dbReference type="Rhea" id="RHEA-COMP:9953"/>
        <dbReference type="ChEBI" id="CHEBI:15378"/>
        <dbReference type="ChEBI" id="CHEBI:57453"/>
        <dbReference type="ChEBI" id="CHEBI:78530"/>
        <dbReference type="ChEBI" id="CHEBI:78844"/>
        <dbReference type="ChEBI" id="CHEBI:195366"/>
        <dbReference type="EC" id="2.1.2.9"/>
    </reaction>
</comment>
<comment type="similarity">
    <text evidence="1">Belongs to the Fmt family.</text>
</comment>
<feature type="chain" id="PRO_1000077321" description="Methionyl-tRNA formyltransferase">
    <location>
        <begin position="1"/>
        <end position="321"/>
    </location>
</feature>
<feature type="binding site" evidence="1">
    <location>
        <begin position="112"/>
        <end position="115"/>
    </location>
    <ligand>
        <name>(6S)-5,6,7,8-tetrahydrofolate</name>
        <dbReference type="ChEBI" id="CHEBI:57453"/>
    </ligand>
</feature>
<organism>
    <name type="scientific">Shewanella pealeana (strain ATCC 700345 / ANG-SQ1)</name>
    <dbReference type="NCBI Taxonomy" id="398579"/>
    <lineage>
        <taxon>Bacteria</taxon>
        <taxon>Pseudomonadati</taxon>
        <taxon>Pseudomonadota</taxon>
        <taxon>Gammaproteobacteria</taxon>
        <taxon>Alteromonadales</taxon>
        <taxon>Shewanellaceae</taxon>
        <taxon>Shewanella</taxon>
    </lineage>
</organism>
<keyword id="KW-0648">Protein biosynthesis</keyword>
<keyword id="KW-1185">Reference proteome</keyword>
<keyword id="KW-0808">Transferase</keyword>
<name>FMT_SHEPA</name>
<evidence type="ECO:0000255" key="1">
    <source>
        <dbReference type="HAMAP-Rule" id="MF_00182"/>
    </source>
</evidence>
<sequence>MKPLNVIFAGTPDFAARHLQALIDSEHNVIAVYTQPDRPAGRGKKLQASPVKALALENDIAVFQPKSLRDEDAQAELAALNADIMVVVAYGLILPKVVLDTPRLGCINVHGSILPRWRGAAPIQRALWAGDTETGVTIMQMDIGLDTGDMLLKTLLPIEDNDTSSTLYEKLAEQGPTALVEALAGIAEGTLPAEKQDESLANYAEKLSKEEARLDWSKPASALWREIRAFNPWPVSHYEHEGNTIKVWQSSVSDETSSQQPGTILSADKSGISIATGEGVLTITQMQLPGKKPLSVADILNSRADWFTPGTVLASTDNQEA</sequence>
<dbReference type="EC" id="2.1.2.9" evidence="1"/>
<dbReference type="EMBL" id="CP000851">
    <property type="protein sequence ID" value="ABV85359.1"/>
    <property type="molecule type" value="Genomic_DNA"/>
</dbReference>
<dbReference type="RefSeq" id="WP_012153305.1">
    <property type="nucleotide sequence ID" value="NC_009901.1"/>
</dbReference>
<dbReference type="SMR" id="A8GYH2"/>
<dbReference type="STRING" id="398579.Spea_0030"/>
<dbReference type="KEGG" id="spl:Spea_0030"/>
<dbReference type="eggNOG" id="COG0223">
    <property type="taxonomic scope" value="Bacteria"/>
</dbReference>
<dbReference type="HOGENOM" id="CLU_033347_1_2_6"/>
<dbReference type="OrthoDB" id="9802815at2"/>
<dbReference type="Proteomes" id="UP000002608">
    <property type="component" value="Chromosome"/>
</dbReference>
<dbReference type="GO" id="GO:0005829">
    <property type="term" value="C:cytosol"/>
    <property type="evidence" value="ECO:0007669"/>
    <property type="project" value="TreeGrafter"/>
</dbReference>
<dbReference type="GO" id="GO:0004479">
    <property type="term" value="F:methionyl-tRNA formyltransferase activity"/>
    <property type="evidence" value="ECO:0007669"/>
    <property type="project" value="UniProtKB-UniRule"/>
</dbReference>
<dbReference type="CDD" id="cd08646">
    <property type="entry name" value="FMT_core_Met-tRNA-FMT_N"/>
    <property type="match status" value="1"/>
</dbReference>
<dbReference type="CDD" id="cd08704">
    <property type="entry name" value="Met_tRNA_FMT_C"/>
    <property type="match status" value="1"/>
</dbReference>
<dbReference type="FunFam" id="3.40.50.12230:FF:000001">
    <property type="entry name" value="Methionyl-tRNA formyltransferase"/>
    <property type="match status" value="1"/>
</dbReference>
<dbReference type="FunFam" id="3.40.50.170:FF:000003">
    <property type="entry name" value="Methionyl-tRNA formyltransferase"/>
    <property type="match status" value="1"/>
</dbReference>
<dbReference type="Gene3D" id="3.10.25.10">
    <property type="entry name" value="Formyl transferase, C-terminal domain"/>
    <property type="match status" value="1"/>
</dbReference>
<dbReference type="Gene3D" id="3.40.50.170">
    <property type="entry name" value="Formyl transferase, N-terminal domain"/>
    <property type="match status" value="1"/>
</dbReference>
<dbReference type="HAMAP" id="MF_00182">
    <property type="entry name" value="Formyl_trans"/>
    <property type="match status" value="1"/>
</dbReference>
<dbReference type="InterPro" id="IPR005794">
    <property type="entry name" value="Fmt"/>
</dbReference>
<dbReference type="InterPro" id="IPR005793">
    <property type="entry name" value="Formyl_trans_C"/>
</dbReference>
<dbReference type="InterPro" id="IPR037022">
    <property type="entry name" value="Formyl_trans_C_sf"/>
</dbReference>
<dbReference type="InterPro" id="IPR002376">
    <property type="entry name" value="Formyl_transf_N"/>
</dbReference>
<dbReference type="InterPro" id="IPR036477">
    <property type="entry name" value="Formyl_transf_N_sf"/>
</dbReference>
<dbReference type="InterPro" id="IPR011034">
    <property type="entry name" value="Formyl_transferase-like_C_sf"/>
</dbReference>
<dbReference type="InterPro" id="IPR001555">
    <property type="entry name" value="GART_AS"/>
</dbReference>
<dbReference type="InterPro" id="IPR044135">
    <property type="entry name" value="Met-tRNA-FMT_C"/>
</dbReference>
<dbReference type="InterPro" id="IPR041711">
    <property type="entry name" value="Met-tRNA-FMT_N"/>
</dbReference>
<dbReference type="NCBIfam" id="TIGR00460">
    <property type="entry name" value="fmt"/>
    <property type="match status" value="1"/>
</dbReference>
<dbReference type="PANTHER" id="PTHR11138">
    <property type="entry name" value="METHIONYL-TRNA FORMYLTRANSFERASE"/>
    <property type="match status" value="1"/>
</dbReference>
<dbReference type="PANTHER" id="PTHR11138:SF5">
    <property type="entry name" value="METHIONYL-TRNA FORMYLTRANSFERASE, MITOCHONDRIAL"/>
    <property type="match status" value="1"/>
</dbReference>
<dbReference type="Pfam" id="PF02911">
    <property type="entry name" value="Formyl_trans_C"/>
    <property type="match status" value="1"/>
</dbReference>
<dbReference type="Pfam" id="PF00551">
    <property type="entry name" value="Formyl_trans_N"/>
    <property type="match status" value="1"/>
</dbReference>
<dbReference type="SUPFAM" id="SSF50486">
    <property type="entry name" value="FMT C-terminal domain-like"/>
    <property type="match status" value="1"/>
</dbReference>
<dbReference type="SUPFAM" id="SSF53328">
    <property type="entry name" value="Formyltransferase"/>
    <property type="match status" value="1"/>
</dbReference>
<dbReference type="PROSITE" id="PS00373">
    <property type="entry name" value="GART"/>
    <property type="match status" value="1"/>
</dbReference>
<protein>
    <recommendedName>
        <fullName evidence="1">Methionyl-tRNA formyltransferase</fullName>
        <ecNumber evidence="1">2.1.2.9</ecNumber>
    </recommendedName>
</protein>
<proteinExistence type="inferred from homology"/>
<accession>A8GYH2</accession>